<organism>
    <name type="scientific">Pongo abelii</name>
    <name type="common">Sumatran orangutan</name>
    <name type="synonym">Pongo pygmaeus abelii</name>
    <dbReference type="NCBI Taxonomy" id="9601"/>
    <lineage>
        <taxon>Eukaryota</taxon>
        <taxon>Metazoa</taxon>
        <taxon>Chordata</taxon>
        <taxon>Craniata</taxon>
        <taxon>Vertebrata</taxon>
        <taxon>Euteleostomi</taxon>
        <taxon>Mammalia</taxon>
        <taxon>Eutheria</taxon>
        <taxon>Euarchontoglires</taxon>
        <taxon>Primates</taxon>
        <taxon>Haplorrhini</taxon>
        <taxon>Catarrhini</taxon>
        <taxon>Hominidae</taxon>
        <taxon>Pongo</taxon>
    </lineage>
</organism>
<evidence type="ECO:0000250" key="1"/>
<evidence type="ECO:0000250" key="2">
    <source>
        <dbReference type="UniProtKB" id="Q6RW13"/>
    </source>
</evidence>
<evidence type="ECO:0000255" key="3"/>
<feature type="chain" id="PRO_0000064737" description="Type-1 angiotensin II receptor-associated protein">
    <location>
        <begin position="1"/>
        <end position="152"/>
    </location>
</feature>
<feature type="topological domain" description="Extracellular" evidence="3">
    <location>
        <begin position="1"/>
        <end position="23"/>
    </location>
</feature>
<feature type="transmembrane region" description="Helical" evidence="3">
    <location>
        <begin position="24"/>
        <end position="44"/>
    </location>
</feature>
<feature type="topological domain" description="Cytoplasmic" evidence="3">
    <location>
        <begin position="45"/>
        <end position="55"/>
    </location>
</feature>
<feature type="transmembrane region" description="Helical" evidence="3">
    <location>
        <begin position="56"/>
        <end position="76"/>
    </location>
</feature>
<feature type="topological domain" description="Extracellular" evidence="3">
    <location>
        <begin position="77"/>
        <end position="86"/>
    </location>
</feature>
<feature type="transmembrane region" description="Helical" evidence="3">
    <location>
        <begin position="87"/>
        <end position="107"/>
    </location>
</feature>
<feature type="topological domain" description="Cytoplasmic" evidence="3">
    <location>
        <begin position="108"/>
        <end position="152"/>
    </location>
</feature>
<feature type="modified residue" description="Phosphoserine" evidence="2">
    <location>
        <position position="119"/>
    </location>
</feature>
<feature type="modified residue" description="Phosphoserine" evidence="2">
    <location>
        <position position="120"/>
    </location>
</feature>
<feature type="modified residue" description="Phosphothreonine" evidence="2">
    <location>
        <position position="128"/>
    </location>
</feature>
<feature type="modified residue" description="Phosphoserine" evidence="2">
    <location>
        <position position="131"/>
    </location>
</feature>
<dbReference type="EMBL" id="CR857454">
    <property type="protein sequence ID" value="CAH89745.1"/>
    <property type="molecule type" value="mRNA"/>
</dbReference>
<dbReference type="RefSeq" id="NP_001127190.1">
    <property type="nucleotide sequence ID" value="NM_001133718.1"/>
</dbReference>
<dbReference type="STRING" id="9601.ENSPPYP00000002181"/>
<dbReference type="Ensembl" id="ENSPPYT00000048797.1">
    <property type="protein sequence ID" value="ENSPPYP00000045301.1"/>
    <property type="gene ID" value="ENSPPYG00000001883.3"/>
</dbReference>
<dbReference type="GeneID" id="100174244"/>
<dbReference type="KEGG" id="pon:100174244"/>
<dbReference type="CTD" id="57085"/>
<dbReference type="eggNOG" id="ENOG502S36M">
    <property type="taxonomic scope" value="Eukaryota"/>
</dbReference>
<dbReference type="GeneTree" id="ENSGT00410000029218"/>
<dbReference type="HOGENOM" id="CLU_126745_0_0_1"/>
<dbReference type="InParanoid" id="Q5RER2"/>
<dbReference type="OMA" id="IMNGWAV"/>
<dbReference type="OrthoDB" id="8191171at2759"/>
<dbReference type="Proteomes" id="UP000001595">
    <property type="component" value="Chromosome 1"/>
</dbReference>
<dbReference type="GO" id="GO:0030659">
    <property type="term" value="C:cytoplasmic vesicle membrane"/>
    <property type="evidence" value="ECO:0007669"/>
    <property type="project" value="UniProtKB-SubCell"/>
</dbReference>
<dbReference type="GO" id="GO:0005789">
    <property type="term" value="C:endoplasmic reticulum membrane"/>
    <property type="evidence" value="ECO:0007669"/>
    <property type="project" value="UniProtKB-SubCell"/>
</dbReference>
<dbReference type="GO" id="GO:0000139">
    <property type="term" value="C:Golgi membrane"/>
    <property type="evidence" value="ECO:0007669"/>
    <property type="project" value="UniProtKB-SubCell"/>
</dbReference>
<dbReference type="GO" id="GO:0005886">
    <property type="term" value="C:plasma membrane"/>
    <property type="evidence" value="ECO:0007669"/>
    <property type="project" value="TreeGrafter"/>
</dbReference>
<dbReference type="GO" id="GO:0038166">
    <property type="term" value="P:angiotensin-activated signaling pathway"/>
    <property type="evidence" value="ECO:0007669"/>
    <property type="project" value="InterPro"/>
</dbReference>
<dbReference type="GO" id="GO:0008217">
    <property type="term" value="P:regulation of blood pressure"/>
    <property type="evidence" value="ECO:0007669"/>
    <property type="project" value="TreeGrafter"/>
</dbReference>
<dbReference type="InterPro" id="IPR009436">
    <property type="entry name" value="AGTRAP"/>
</dbReference>
<dbReference type="PANTHER" id="PTHR16521">
    <property type="entry name" value="TYPE-1 ANGIOTENSIN II RECEPTOR-ASSOCIATED PROTEIN"/>
    <property type="match status" value="1"/>
</dbReference>
<dbReference type="PANTHER" id="PTHR16521:SF3">
    <property type="entry name" value="TYPE-1 ANGIOTENSIN II RECEPTOR-ASSOCIATED PROTEIN"/>
    <property type="match status" value="1"/>
</dbReference>
<dbReference type="Pfam" id="PF06396">
    <property type="entry name" value="AGTRAP"/>
    <property type="match status" value="1"/>
</dbReference>
<dbReference type="SMART" id="SM00805">
    <property type="entry name" value="AGTRAP"/>
    <property type="match status" value="1"/>
</dbReference>
<accession>Q5RER2</accession>
<gene>
    <name type="primary">AGTRAP</name>
</gene>
<proteinExistence type="evidence at transcript level"/>
<reference key="1">
    <citation type="submission" date="2004-11" db="EMBL/GenBank/DDBJ databases">
        <authorList>
            <consortium name="The German cDNA consortium"/>
        </authorList>
    </citation>
    <scope>NUCLEOTIDE SEQUENCE [LARGE SCALE MRNA]</scope>
    <source>
        <tissue>Kidney</tissue>
    </source>
</reference>
<comment type="function">
    <text evidence="1">Appears to be a negative regulator of type-1 angiotensin II receptor-mediated signaling by regulating receptor internalization as well as mechanism of receptor desensitization such as phosphorylation. Also induces a decrease in cell proliferation and angiotensin II-stimulated transcriptional activity (By similarity).</text>
</comment>
<comment type="subunit">
    <text evidence="1">Interacts with RACK1, and with the carboxy-terminal region of AGTR1.</text>
</comment>
<comment type="subcellular location">
    <subcellularLocation>
        <location evidence="1">Endoplasmic reticulum membrane</location>
        <topology evidence="1">Multi-pass membrane protein</topology>
    </subcellularLocation>
    <subcellularLocation>
        <location evidence="1">Golgi apparatus membrane</location>
        <topology evidence="1">Multi-pass membrane protein</topology>
    </subcellularLocation>
    <subcellularLocation>
        <location evidence="1">Cytoplasmic vesicle membrane</location>
        <topology evidence="1">Multi-pass membrane protein</topology>
    </subcellularLocation>
    <text evidence="1">Present in perinuclear vesicular membranes, Endoplasmic reticulum, Golgi and endocytic vesicles.</text>
</comment>
<name>ATRAP_PONAB</name>
<protein>
    <recommendedName>
        <fullName>Type-1 angiotensin II receptor-associated protein</fullName>
    </recommendedName>
    <alternativeName>
        <fullName>AT1 receptor-associated protein</fullName>
    </alternativeName>
</protein>
<sequence>MELPAVNLKVILLGHWLLTTWGCIVFSGSYAWANFTILALGVWAVAQRDSIDAISMFLGGLLATIFLDIVHISIFYPRAGLTDTGRFGAGMAILSLLLKPLSCCFVYHMYRQRGGFLGSSQDRSAYQTIDSAEAPANAFAVPEGRGQDARGY</sequence>
<keyword id="KW-0968">Cytoplasmic vesicle</keyword>
<keyword id="KW-0256">Endoplasmic reticulum</keyword>
<keyword id="KW-0333">Golgi apparatus</keyword>
<keyword id="KW-0472">Membrane</keyword>
<keyword id="KW-0597">Phosphoprotein</keyword>
<keyword id="KW-1185">Reference proteome</keyword>
<keyword id="KW-0812">Transmembrane</keyword>
<keyword id="KW-1133">Transmembrane helix</keyword>